<comment type="function">
    <text evidence="1">Binds double-stranded RNA.</text>
</comment>
<organism>
    <name type="scientific">Oryza sativa subsp. japonica</name>
    <name type="common">Rice</name>
    <dbReference type="NCBI Taxonomy" id="39947"/>
    <lineage>
        <taxon>Eukaryota</taxon>
        <taxon>Viridiplantae</taxon>
        <taxon>Streptophyta</taxon>
        <taxon>Embryophyta</taxon>
        <taxon>Tracheophyta</taxon>
        <taxon>Spermatophyta</taxon>
        <taxon>Magnoliopsida</taxon>
        <taxon>Liliopsida</taxon>
        <taxon>Poales</taxon>
        <taxon>Poaceae</taxon>
        <taxon>BOP clade</taxon>
        <taxon>Oryzoideae</taxon>
        <taxon>Oryzeae</taxon>
        <taxon>Oryzinae</taxon>
        <taxon>Oryza</taxon>
        <taxon>Oryza sativa</taxon>
    </lineage>
</organism>
<dbReference type="EMBL" id="AP008211">
    <property type="protein sequence ID" value="BAF17070.1"/>
    <property type="molecule type" value="Genomic_DNA"/>
</dbReference>
<dbReference type="EMBL" id="AP014961">
    <property type="protein sequence ID" value="BAS93274.1"/>
    <property type="molecule type" value="Genomic_DNA"/>
</dbReference>
<dbReference type="EMBL" id="AK072444">
    <property type="protein sequence ID" value="BAG92973.1"/>
    <property type="molecule type" value="mRNA"/>
</dbReference>
<dbReference type="RefSeq" id="XP_015640437.1">
    <property type="nucleotide sequence ID" value="XM_015784951.1"/>
</dbReference>
<dbReference type="SMR" id="Q0DJA3"/>
<dbReference type="STRING" id="39947.Q0DJA3"/>
<dbReference type="iPTMnet" id="Q0DJA3"/>
<dbReference type="PaxDb" id="39947-Q0DJA3"/>
<dbReference type="EnsemblPlants" id="Os05t0307400-01">
    <property type="protein sequence ID" value="Os05t0307400-01"/>
    <property type="gene ID" value="Os05g0307400"/>
</dbReference>
<dbReference type="Gramene" id="Os05t0307400-01">
    <property type="protein sequence ID" value="Os05t0307400-01"/>
    <property type="gene ID" value="Os05g0307400"/>
</dbReference>
<dbReference type="KEGG" id="dosa:Os05g0307400"/>
<dbReference type="eggNOG" id="KOG1517">
    <property type="taxonomic scope" value="Eukaryota"/>
</dbReference>
<dbReference type="HOGENOM" id="CLU_601863_0_0_1"/>
<dbReference type="InParanoid" id="Q0DJA3"/>
<dbReference type="OMA" id="PPRVENC"/>
<dbReference type="OrthoDB" id="185373at2759"/>
<dbReference type="Proteomes" id="UP000000763">
    <property type="component" value="Chromosome 5"/>
</dbReference>
<dbReference type="Proteomes" id="UP000059680">
    <property type="component" value="Chromosome 5"/>
</dbReference>
<dbReference type="GO" id="GO:0005634">
    <property type="term" value="C:nucleus"/>
    <property type="evidence" value="ECO:0000318"/>
    <property type="project" value="GO_Central"/>
</dbReference>
<dbReference type="GO" id="GO:0003725">
    <property type="term" value="F:double-stranded RNA binding"/>
    <property type="evidence" value="ECO:0000318"/>
    <property type="project" value="GO_Central"/>
</dbReference>
<dbReference type="GO" id="GO:0004525">
    <property type="term" value="F:ribonuclease III activity"/>
    <property type="evidence" value="ECO:0000318"/>
    <property type="project" value="GO_Central"/>
</dbReference>
<dbReference type="GO" id="GO:0010468">
    <property type="term" value="P:regulation of gene expression"/>
    <property type="evidence" value="ECO:0000318"/>
    <property type="project" value="GO_Central"/>
</dbReference>
<dbReference type="GO" id="GO:0006396">
    <property type="term" value="P:RNA processing"/>
    <property type="evidence" value="ECO:0000318"/>
    <property type="project" value="GO_Central"/>
</dbReference>
<dbReference type="FunFam" id="3.30.160.20:FF:000048">
    <property type="entry name" value="Double-stranded RNA-binding protein 1"/>
    <property type="match status" value="1"/>
</dbReference>
<dbReference type="FunFam" id="3.30.160.20:FF:000047">
    <property type="entry name" value="double-stranded RNA-binding protein 1"/>
    <property type="match status" value="1"/>
</dbReference>
<dbReference type="Gene3D" id="3.30.160.20">
    <property type="match status" value="2"/>
</dbReference>
<dbReference type="InterPro" id="IPR014720">
    <property type="entry name" value="dsRBD_dom"/>
</dbReference>
<dbReference type="InterPro" id="IPR029347">
    <property type="entry name" value="Raptor_N"/>
</dbReference>
<dbReference type="PANTHER" id="PTHR11207:SF1">
    <property type="entry name" value="DOUBLE-STRANDED RNA-BINDING PROTEIN 1"/>
    <property type="match status" value="1"/>
</dbReference>
<dbReference type="PANTHER" id="PTHR11207">
    <property type="entry name" value="RIBONUCLEASE III"/>
    <property type="match status" value="1"/>
</dbReference>
<dbReference type="Pfam" id="PF00035">
    <property type="entry name" value="dsrm"/>
    <property type="match status" value="2"/>
</dbReference>
<dbReference type="Pfam" id="PF14538">
    <property type="entry name" value="Raptor_N"/>
    <property type="match status" value="1"/>
</dbReference>
<dbReference type="PRINTS" id="PR01547">
    <property type="entry name" value="YEAST176DUF"/>
</dbReference>
<dbReference type="SMART" id="SM00358">
    <property type="entry name" value="DSRM"/>
    <property type="match status" value="2"/>
</dbReference>
<dbReference type="SMART" id="SM01302">
    <property type="entry name" value="Raptor_N"/>
    <property type="match status" value="1"/>
</dbReference>
<dbReference type="SUPFAM" id="SSF54768">
    <property type="entry name" value="dsRNA-binding domain-like"/>
    <property type="match status" value="2"/>
</dbReference>
<dbReference type="PROSITE" id="PS50137">
    <property type="entry name" value="DS_RBD"/>
    <property type="match status" value="2"/>
</dbReference>
<proteinExistence type="evidence at transcript level"/>
<protein>
    <recommendedName>
        <fullName>Double-stranded RNA-binding protein 3</fullName>
    </recommendedName>
    <alternativeName>
        <fullName>dsRNA-binding protein 3</fullName>
    </alternativeName>
</protein>
<sequence>MKKKSAPTPLPPETANTSPAPIGATAGIRVENCYVFKSRLQEYAQKAGLQTPEYHTSKEGPSHEPVFKSTVVINNTSYGSLPGFSNRKAAEQSAAEVALMEIVKSIPANANIPAVQETGLCKNLLQEYAQKMNYAIPSYICTKPASGLAPFLCTVEIGGIQYIGAAARTKKDAEIKAARTALLAIQGQSEGSANGATKYIVVPGKRVGKEVEKRPIETPKPLKAKKGGFKKKWNKRKFMKKDGQAVDVEKDEARVAGDAHDSDVLMQPTVITQEASCGTLFLQPCEEAKRVEDEPPRDIEMVQPDKENQHSDAALVQPDDEARVEQEPSRDISVVQPNEEAISAKQEPSIDAATLQPKEEAMKTGCVALVLCLNISVDPPDVIKISPCVRKECWIDPFSMAAPKALETIGKTLHSQYERWQPKARYKLQLDPTLEEV</sequence>
<evidence type="ECO:0000250" key="1"/>
<evidence type="ECO:0000255" key="2">
    <source>
        <dbReference type="PROSITE-ProRule" id="PRU00266"/>
    </source>
</evidence>
<evidence type="ECO:0000256" key="3">
    <source>
        <dbReference type="SAM" id="MobiDB-lite"/>
    </source>
</evidence>
<reference key="1">
    <citation type="journal article" date="2005" name="Nature">
        <title>The map-based sequence of the rice genome.</title>
        <authorList>
            <consortium name="International rice genome sequencing project (IRGSP)"/>
        </authorList>
    </citation>
    <scope>NUCLEOTIDE SEQUENCE [LARGE SCALE GENOMIC DNA]</scope>
    <source>
        <strain>cv. Nipponbare</strain>
    </source>
</reference>
<reference key="2">
    <citation type="journal article" date="2008" name="Nucleic Acids Res.">
        <title>The rice annotation project database (RAP-DB): 2008 update.</title>
        <authorList>
            <consortium name="The rice annotation project (RAP)"/>
        </authorList>
    </citation>
    <scope>GENOME REANNOTATION</scope>
    <source>
        <strain>cv. Nipponbare</strain>
    </source>
</reference>
<reference key="3">
    <citation type="journal article" date="2013" name="Rice">
        <title>Improvement of the Oryza sativa Nipponbare reference genome using next generation sequence and optical map data.</title>
        <authorList>
            <person name="Kawahara Y."/>
            <person name="de la Bastide M."/>
            <person name="Hamilton J.P."/>
            <person name="Kanamori H."/>
            <person name="McCombie W.R."/>
            <person name="Ouyang S."/>
            <person name="Schwartz D.C."/>
            <person name="Tanaka T."/>
            <person name="Wu J."/>
            <person name="Zhou S."/>
            <person name="Childs K.L."/>
            <person name="Davidson R.M."/>
            <person name="Lin H."/>
            <person name="Quesada-Ocampo L."/>
            <person name="Vaillancourt B."/>
            <person name="Sakai H."/>
            <person name="Lee S.S."/>
            <person name="Kim J."/>
            <person name="Numa H."/>
            <person name="Itoh T."/>
            <person name="Buell C.R."/>
            <person name="Matsumoto T."/>
        </authorList>
    </citation>
    <scope>GENOME REANNOTATION</scope>
    <source>
        <strain>cv. Nipponbare</strain>
    </source>
</reference>
<reference key="4">
    <citation type="journal article" date="2003" name="Science">
        <title>Collection, mapping, and annotation of over 28,000 cDNA clones from japonica rice.</title>
        <authorList>
            <consortium name="The rice full-length cDNA consortium"/>
        </authorList>
    </citation>
    <scope>NUCLEOTIDE SEQUENCE [LARGE SCALE MRNA]</scope>
    <source>
        <strain>cv. Nipponbare</strain>
    </source>
</reference>
<name>DRB3_ORYSJ</name>
<keyword id="KW-1185">Reference proteome</keyword>
<keyword id="KW-0677">Repeat</keyword>
<keyword id="KW-0694">RNA-binding</keyword>
<feature type="chain" id="PRO_0000404680" description="Double-stranded RNA-binding protein 3">
    <location>
        <begin position="1"/>
        <end position="437"/>
    </location>
</feature>
<feature type="domain" description="DRBM 1" evidence="2">
    <location>
        <begin position="35"/>
        <end position="104"/>
    </location>
</feature>
<feature type="domain" description="DRBM 2" evidence="2">
    <location>
        <begin position="120"/>
        <end position="187"/>
    </location>
</feature>
<feature type="region of interest" description="Disordered" evidence="3">
    <location>
        <begin position="1"/>
        <end position="22"/>
    </location>
</feature>
<feature type="region of interest" description="Disordered" evidence="3">
    <location>
        <begin position="288"/>
        <end position="331"/>
    </location>
</feature>
<feature type="compositionally biased region" description="Basic and acidic residues" evidence="3">
    <location>
        <begin position="288"/>
        <end position="310"/>
    </location>
</feature>
<feature type="compositionally biased region" description="Basic and acidic residues" evidence="3">
    <location>
        <begin position="320"/>
        <end position="330"/>
    </location>
</feature>
<gene>
    <name type="primary">DRB3</name>
    <name type="ordered locus">Os05g0307400</name>
    <name type="ordered locus">LOC_Os05g24160</name>
</gene>
<accession>Q0DJA3</accession>
<accession>A0A0P0WKE9</accession>